<evidence type="ECO:0000255" key="1">
    <source>
        <dbReference type="HAMAP-Rule" id="MF_00057"/>
    </source>
</evidence>
<sequence>MTQAFTVVIPARYASTRLPGKPLQDIAGQPMIQRVWNQARKSAASRVVVATDDERILAACQGFGAEALLTRAEHNSGTDRLEEVASRLGLASDAIVVNVQGDEPLIPPALIDQVAANLAAHPEAAIATLAEPIHEVSALFNPNVVKVATDIDGLALTFSRAPLPWARDAFARDRDSLPEGVPYRRHIGIYAYRVGFLADFVAWGPCWLENAESLEQLRALWHGVRIHVADARETMLPGVDTPEDLERVRRVLGD</sequence>
<comment type="function">
    <text evidence="1">Activates KDO (a required 8-carbon sugar) for incorporation into bacterial lipopolysaccharide in Gram-negative bacteria.</text>
</comment>
<comment type="catalytic activity">
    <reaction evidence="1">
        <text>3-deoxy-alpha-D-manno-oct-2-ulosonate + CTP = CMP-3-deoxy-beta-D-manno-octulosonate + diphosphate</text>
        <dbReference type="Rhea" id="RHEA:23448"/>
        <dbReference type="ChEBI" id="CHEBI:33019"/>
        <dbReference type="ChEBI" id="CHEBI:37563"/>
        <dbReference type="ChEBI" id="CHEBI:85986"/>
        <dbReference type="ChEBI" id="CHEBI:85987"/>
        <dbReference type="EC" id="2.7.7.38"/>
    </reaction>
</comment>
<comment type="pathway">
    <text evidence="1">Nucleotide-sugar biosynthesis; CMP-3-deoxy-D-manno-octulosonate biosynthesis; CMP-3-deoxy-D-manno-octulosonate from 3-deoxy-D-manno-octulosonate and CTP: step 1/1.</text>
</comment>
<comment type="pathway">
    <text evidence="1">Bacterial outer membrane biogenesis; lipopolysaccharide biosynthesis.</text>
</comment>
<comment type="subcellular location">
    <subcellularLocation>
        <location evidence="1">Cytoplasm</location>
    </subcellularLocation>
</comment>
<comment type="similarity">
    <text evidence="1">Belongs to the KdsB family.</text>
</comment>
<gene>
    <name evidence="1" type="primary">kdsB</name>
    <name type="ordered locus">PA14_25530</name>
</gene>
<reference key="1">
    <citation type="journal article" date="2006" name="Genome Biol.">
        <title>Genomic analysis reveals that Pseudomonas aeruginosa virulence is combinatorial.</title>
        <authorList>
            <person name="Lee D.G."/>
            <person name="Urbach J.M."/>
            <person name="Wu G."/>
            <person name="Liberati N.T."/>
            <person name="Feinbaum R.L."/>
            <person name="Miyata S."/>
            <person name="Diggins L.T."/>
            <person name="He J."/>
            <person name="Saucier M."/>
            <person name="Deziel E."/>
            <person name="Friedman L."/>
            <person name="Li L."/>
            <person name="Grills G."/>
            <person name="Montgomery K."/>
            <person name="Kucherlapati R."/>
            <person name="Rahme L.G."/>
            <person name="Ausubel F.M."/>
        </authorList>
    </citation>
    <scope>NUCLEOTIDE SEQUENCE [LARGE SCALE GENOMIC DNA]</scope>
    <source>
        <strain>UCBPP-PA14</strain>
    </source>
</reference>
<name>KDSB_PSEAB</name>
<accession>Q02PE2</accession>
<protein>
    <recommendedName>
        <fullName evidence="1">3-deoxy-manno-octulosonate cytidylyltransferase</fullName>
        <ecNumber evidence="1">2.7.7.38</ecNumber>
    </recommendedName>
    <alternativeName>
        <fullName evidence="1">CMP-2-keto-3-deoxyoctulosonic acid synthase</fullName>
        <shortName evidence="1">CKS</shortName>
        <shortName evidence="1">CMP-KDO synthase</shortName>
    </alternativeName>
</protein>
<feature type="chain" id="PRO_1000091889" description="3-deoxy-manno-octulosonate cytidylyltransferase">
    <location>
        <begin position="1"/>
        <end position="254"/>
    </location>
</feature>
<proteinExistence type="inferred from homology"/>
<keyword id="KW-0963">Cytoplasm</keyword>
<keyword id="KW-0448">Lipopolysaccharide biosynthesis</keyword>
<keyword id="KW-0548">Nucleotidyltransferase</keyword>
<keyword id="KW-0808">Transferase</keyword>
<organism>
    <name type="scientific">Pseudomonas aeruginosa (strain UCBPP-PA14)</name>
    <dbReference type="NCBI Taxonomy" id="208963"/>
    <lineage>
        <taxon>Bacteria</taxon>
        <taxon>Pseudomonadati</taxon>
        <taxon>Pseudomonadota</taxon>
        <taxon>Gammaproteobacteria</taxon>
        <taxon>Pseudomonadales</taxon>
        <taxon>Pseudomonadaceae</taxon>
        <taxon>Pseudomonas</taxon>
    </lineage>
</organism>
<dbReference type="EC" id="2.7.7.38" evidence="1"/>
<dbReference type="EMBL" id="CP000438">
    <property type="protein sequence ID" value="ABJ12217.1"/>
    <property type="molecule type" value="Genomic_DNA"/>
</dbReference>
<dbReference type="RefSeq" id="WP_003130694.1">
    <property type="nucleotide sequence ID" value="NZ_CP034244.1"/>
</dbReference>
<dbReference type="SMR" id="Q02PE2"/>
<dbReference type="KEGG" id="pau:PA14_25530"/>
<dbReference type="PseudoCAP" id="PA14_25530"/>
<dbReference type="HOGENOM" id="CLU_065038_1_0_6"/>
<dbReference type="BioCyc" id="PAER208963:G1G74-2129-MONOMER"/>
<dbReference type="UniPathway" id="UPA00030"/>
<dbReference type="UniPathway" id="UPA00358">
    <property type="reaction ID" value="UER00476"/>
</dbReference>
<dbReference type="Proteomes" id="UP000000653">
    <property type="component" value="Chromosome"/>
</dbReference>
<dbReference type="GO" id="GO:0005829">
    <property type="term" value="C:cytosol"/>
    <property type="evidence" value="ECO:0007669"/>
    <property type="project" value="TreeGrafter"/>
</dbReference>
<dbReference type="GO" id="GO:0008690">
    <property type="term" value="F:3-deoxy-manno-octulosonate cytidylyltransferase activity"/>
    <property type="evidence" value="ECO:0007669"/>
    <property type="project" value="UniProtKB-UniRule"/>
</dbReference>
<dbReference type="GO" id="GO:0033468">
    <property type="term" value="P:CMP-keto-3-deoxy-D-manno-octulosonic acid biosynthetic process"/>
    <property type="evidence" value="ECO:0007669"/>
    <property type="project" value="UniProtKB-UniRule"/>
</dbReference>
<dbReference type="GO" id="GO:0009103">
    <property type="term" value="P:lipopolysaccharide biosynthetic process"/>
    <property type="evidence" value="ECO:0007669"/>
    <property type="project" value="UniProtKB-UniRule"/>
</dbReference>
<dbReference type="CDD" id="cd02517">
    <property type="entry name" value="CMP-KDO-Synthetase"/>
    <property type="match status" value="1"/>
</dbReference>
<dbReference type="FunFam" id="3.90.550.10:FF:000011">
    <property type="entry name" value="3-deoxy-manno-octulosonate cytidylyltransferase"/>
    <property type="match status" value="1"/>
</dbReference>
<dbReference type="Gene3D" id="3.90.550.10">
    <property type="entry name" value="Spore Coat Polysaccharide Biosynthesis Protein SpsA, Chain A"/>
    <property type="match status" value="1"/>
</dbReference>
<dbReference type="HAMAP" id="MF_00057">
    <property type="entry name" value="KdsB"/>
    <property type="match status" value="1"/>
</dbReference>
<dbReference type="InterPro" id="IPR003329">
    <property type="entry name" value="Cytidylyl_trans"/>
</dbReference>
<dbReference type="InterPro" id="IPR004528">
    <property type="entry name" value="KdsB"/>
</dbReference>
<dbReference type="InterPro" id="IPR029044">
    <property type="entry name" value="Nucleotide-diphossugar_trans"/>
</dbReference>
<dbReference type="NCBIfam" id="TIGR00466">
    <property type="entry name" value="kdsB"/>
    <property type="match status" value="1"/>
</dbReference>
<dbReference type="NCBIfam" id="NF003950">
    <property type="entry name" value="PRK05450.1-3"/>
    <property type="match status" value="1"/>
</dbReference>
<dbReference type="NCBIfam" id="NF003952">
    <property type="entry name" value="PRK05450.1-5"/>
    <property type="match status" value="1"/>
</dbReference>
<dbReference type="NCBIfam" id="NF009905">
    <property type="entry name" value="PRK13368.1"/>
    <property type="match status" value="1"/>
</dbReference>
<dbReference type="PANTHER" id="PTHR42866">
    <property type="entry name" value="3-DEOXY-MANNO-OCTULOSONATE CYTIDYLYLTRANSFERASE"/>
    <property type="match status" value="1"/>
</dbReference>
<dbReference type="PANTHER" id="PTHR42866:SF2">
    <property type="entry name" value="3-DEOXY-MANNO-OCTULOSONATE CYTIDYLYLTRANSFERASE, MITOCHONDRIAL"/>
    <property type="match status" value="1"/>
</dbReference>
<dbReference type="Pfam" id="PF02348">
    <property type="entry name" value="CTP_transf_3"/>
    <property type="match status" value="1"/>
</dbReference>
<dbReference type="SUPFAM" id="SSF53448">
    <property type="entry name" value="Nucleotide-diphospho-sugar transferases"/>
    <property type="match status" value="1"/>
</dbReference>